<dbReference type="EC" id="1.1.1.94" evidence="1"/>
<dbReference type="EMBL" id="CP000153">
    <property type="protein sequence ID" value="ABB44608.1"/>
    <property type="molecule type" value="Genomic_DNA"/>
</dbReference>
<dbReference type="RefSeq" id="WP_011372960.1">
    <property type="nucleotide sequence ID" value="NC_007575.1"/>
</dbReference>
<dbReference type="SMR" id="Q30QX3"/>
<dbReference type="STRING" id="326298.Suden_1330"/>
<dbReference type="KEGG" id="tdn:Suden_1330"/>
<dbReference type="eggNOG" id="COG0240">
    <property type="taxonomic scope" value="Bacteria"/>
</dbReference>
<dbReference type="HOGENOM" id="CLU_033449_0_2_7"/>
<dbReference type="OrthoDB" id="9812273at2"/>
<dbReference type="UniPathway" id="UPA00940"/>
<dbReference type="Proteomes" id="UP000002714">
    <property type="component" value="Chromosome"/>
</dbReference>
<dbReference type="GO" id="GO:0005829">
    <property type="term" value="C:cytosol"/>
    <property type="evidence" value="ECO:0007669"/>
    <property type="project" value="TreeGrafter"/>
</dbReference>
<dbReference type="GO" id="GO:0047952">
    <property type="term" value="F:glycerol-3-phosphate dehydrogenase [NAD(P)+] activity"/>
    <property type="evidence" value="ECO:0007669"/>
    <property type="project" value="UniProtKB-UniRule"/>
</dbReference>
<dbReference type="GO" id="GO:0051287">
    <property type="term" value="F:NAD binding"/>
    <property type="evidence" value="ECO:0007669"/>
    <property type="project" value="InterPro"/>
</dbReference>
<dbReference type="GO" id="GO:0005975">
    <property type="term" value="P:carbohydrate metabolic process"/>
    <property type="evidence" value="ECO:0007669"/>
    <property type="project" value="InterPro"/>
</dbReference>
<dbReference type="GO" id="GO:0046167">
    <property type="term" value="P:glycerol-3-phosphate biosynthetic process"/>
    <property type="evidence" value="ECO:0007669"/>
    <property type="project" value="UniProtKB-UniRule"/>
</dbReference>
<dbReference type="GO" id="GO:0046168">
    <property type="term" value="P:glycerol-3-phosphate catabolic process"/>
    <property type="evidence" value="ECO:0007669"/>
    <property type="project" value="InterPro"/>
</dbReference>
<dbReference type="GO" id="GO:0006650">
    <property type="term" value="P:glycerophospholipid metabolic process"/>
    <property type="evidence" value="ECO:0007669"/>
    <property type="project" value="UniProtKB-UniRule"/>
</dbReference>
<dbReference type="GO" id="GO:0008654">
    <property type="term" value="P:phospholipid biosynthetic process"/>
    <property type="evidence" value="ECO:0007669"/>
    <property type="project" value="UniProtKB-KW"/>
</dbReference>
<dbReference type="Gene3D" id="1.10.1040.10">
    <property type="entry name" value="N-(1-d-carboxylethyl)-l-norvaline Dehydrogenase, domain 2"/>
    <property type="match status" value="1"/>
</dbReference>
<dbReference type="Gene3D" id="3.40.50.720">
    <property type="entry name" value="NAD(P)-binding Rossmann-like Domain"/>
    <property type="match status" value="1"/>
</dbReference>
<dbReference type="HAMAP" id="MF_00394">
    <property type="entry name" value="NAD_Glyc3P_dehydrog"/>
    <property type="match status" value="1"/>
</dbReference>
<dbReference type="InterPro" id="IPR008927">
    <property type="entry name" value="6-PGluconate_DH-like_C_sf"/>
</dbReference>
<dbReference type="InterPro" id="IPR013328">
    <property type="entry name" value="6PGD_dom2"/>
</dbReference>
<dbReference type="InterPro" id="IPR006168">
    <property type="entry name" value="G3P_DH_NAD-dep"/>
</dbReference>
<dbReference type="InterPro" id="IPR006109">
    <property type="entry name" value="G3P_DH_NAD-dep_C"/>
</dbReference>
<dbReference type="InterPro" id="IPR011128">
    <property type="entry name" value="G3P_DH_NAD-dep_N"/>
</dbReference>
<dbReference type="InterPro" id="IPR036291">
    <property type="entry name" value="NAD(P)-bd_dom_sf"/>
</dbReference>
<dbReference type="NCBIfam" id="NF000940">
    <property type="entry name" value="PRK00094.1-2"/>
    <property type="match status" value="1"/>
</dbReference>
<dbReference type="NCBIfam" id="NF000942">
    <property type="entry name" value="PRK00094.1-4"/>
    <property type="match status" value="1"/>
</dbReference>
<dbReference type="NCBIfam" id="NF000943">
    <property type="entry name" value="PRK00094.2-1"/>
    <property type="match status" value="1"/>
</dbReference>
<dbReference type="PANTHER" id="PTHR11728">
    <property type="entry name" value="GLYCEROL-3-PHOSPHATE DEHYDROGENASE"/>
    <property type="match status" value="1"/>
</dbReference>
<dbReference type="PANTHER" id="PTHR11728:SF1">
    <property type="entry name" value="GLYCEROL-3-PHOSPHATE DEHYDROGENASE [NAD(+)] 2, CHLOROPLASTIC"/>
    <property type="match status" value="1"/>
</dbReference>
<dbReference type="Pfam" id="PF07479">
    <property type="entry name" value="NAD_Gly3P_dh_C"/>
    <property type="match status" value="1"/>
</dbReference>
<dbReference type="Pfam" id="PF01210">
    <property type="entry name" value="NAD_Gly3P_dh_N"/>
    <property type="match status" value="1"/>
</dbReference>
<dbReference type="PIRSF" id="PIRSF000114">
    <property type="entry name" value="Glycerol-3-P_dh"/>
    <property type="match status" value="1"/>
</dbReference>
<dbReference type="SUPFAM" id="SSF48179">
    <property type="entry name" value="6-phosphogluconate dehydrogenase C-terminal domain-like"/>
    <property type="match status" value="1"/>
</dbReference>
<dbReference type="SUPFAM" id="SSF51735">
    <property type="entry name" value="NAD(P)-binding Rossmann-fold domains"/>
    <property type="match status" value="1"/>
</dbReference>
<dbReference type="PROSITE" id="PS00957">
    <property type="entry name" value="NAD_G3PDH"/>
    <property type="match status" value="1"/>
</dbReference>
<comment type="function">
    <text evidence="1">Catalyzes the reduction of the glycolytic intermediate dihydroxyacetone phosphate (DHAP) to sn-glycerol 3-phosphate (G3P), the key precursor for phospholipid synthesis.</text>
</comment>
<comment type="catalytic activity">
    <reaction evidence="1">
        <text>sn-glycerol 3-phosphate + NAD(+) = dihydroxyacetone phosphate + NADH + H(+)</text>
        <dbReference type="Rhea" id="RHEA:11092"/>
        <dbReference type="ChEBI" id="CHEBI:15378"/>
        <dbReference type="ChEBI" id="CHEBI:57540"/>
        <dbReference type="ChEBI" id="CHEBI:57597"/>
        <dbReference type="ChEBI" id="CHEBI:57642"/>
        <dbReference type="ChEBI" id="CHEBI:57945"/>
        <dbReference type="EC" id="1.1.1.94"/>
    </reaction>
    <physiologicalReaction direction="right-to-left" evidence="1">
        <dbReference type="Rhea" id="RHEA:11094"/>
    </physiologicalReaction>
</comment>
<comment type="catalytic activity">
    <reaction evidence="1">
        <text>sn-glycerol 3-phosphate + NADP(+) = dihydroxyacetone phosphate + NADPH + H(+)</text>
        <dbReference type="Rhea" id="RHEA:11096"/>
        <dbReference type="ChEBI" id="CHEBI:15378"/>
        <dbReference type="ChEBI" id="CHEBI:57597"/>
        <dbReference type="ChEBI" id="CHEBI:57642"/>
        <dbReference type="ChEBI" id="CHEBI:57783"/>
        <dbReference type="ChEBI" id="CHEBI:58349"/>
        <dbReference type="EC" id="1.1.1.94"/>
    </reaction>
    <physiologicalReaction direction="right-to-left" evidence="1">
        <dbReference type="Rhea" id="RHEA:11098"/>
    </physiologicalReaction>
</comment>
<comment type="pathway">
    <text evidence="1">Membrane lipid metabolism; glycerophospholipid metabolism.</text>
</comment>
<comment type="subcellular location">
    <subcellularLocation>
        <location evidence="1">Cytoplasm</location>
    </subcellularLocation>
</comment>
<comment type="similarity">
    <text evidence="1">Belongs to the NAD-dependent glycerol-3-phosphate dehydrogenase family.</text>
</comment>
<accession>Q30QX3</accession>
<reference key="1">
    <citation type="journal article" date="2008" name="Appl. Environ. Microbiol.">
        <title>Genome of the epsilonproteobacterial chemolithoautotroph Sulfurimonas denitrificans.</title>
        <authorList>
            <person name="Sievert S.M."/>
            <person name="Scott K.M."/>
            <person name="Klotz M.G."/>
            <person name="Chain P.S.G."/>
            <person name="Hauser L.J."/>
            <person name="Hemp J."/>
            <person name="Huegler M."/>
            <person name="Land M."/>
            <person name="Lapidus A."/>
            <person name="Larimer F.W."/>
            <person name="Lucas S."/>
            <person name="Malfatti S.A."/>
            <person name="Meyer F."/>
            <person name="Paulsen I.T."/>
            <person name="Ren Q."/>
            <person name="Simon J."/>
            <person name="Bailey K."/>
            <person name="Diaz E."/>
            <person name="Fitzpatrick K.A."/>
            <person name="Glover B."/>
            <person name="Gwatney N."/>
            <person name="Korajkic A."/>
            <person name="Long A."/>
            <person name="Mobberley J.M."/>
            <person name="Pantry S.N."/>
            <person name="Pazder G."/>
            <person name="Peterson S."/>
            <person name="Quintanilla J.D."/>
            <person name="Sprinkle R."/>
            <person name="Stephens J."/>
            <person name="Thomas P."/>
            <person name="Vaughn R."/>
            <person name="Weber M.J."/>
            <person name="Wooten L.L."/>
        </authorList>
    </citation>
    <scope>NUCLEOTIDE SEQUENCE [LARGE SCALE GENOMIC DNA]</scope>
    <source>
        <strain>ATCC 33889 / DSM 1251</strain>
    </source>
</reference>
<gene>
    <name evidence="1" type="primary">gpsA</name>
    <name type="ordered locus">Suden_1330</name>
</gene>
<name>GPDA_SULDN</name>
<protein>
    <recommendedName>
        <fullName evidence="1">Glycerol-3-phosphate dehydrogenase [NAD(P)+]</fullName>
        <ecNumber evidence="1">1.1.1.94</ecNumber>
    </recommendedName>
    <alternativeName>
        <fullName evidence="1">NAD(P)(+)-dependent glycerol-3-phosphate dehydrogenase</fullName>
    </alternativeName>
    <alternativeName>
        <fullName evidence="1">NAD(P)H-dependent dihydroxyacetone-phosphate reductase</fullName>
    </alternativeName>
</protein>
<sequence>MSKVGVIGAGKWGSALAFALSEKCEVYITSRTPRDMKNFVSLEEILRLEYLVIAIPAQQVSSWLREHFIYNNHKVLVAAKGIEATSGKFLNEIYEEHVPNEKIAFLSGPSFATEVMKSLPTALVINSINEELSAEFACFFPSFIKTYTSTDIAGAEVAGAYKNVIAIAAGICEGLGLGKNAAASLISRGLVEMQRFGKVYGAKDESFIGLSGAGDLFLTASSTMSRNFRVGLGIAEGKSKEQIVEELGEVAEGIGTTYALYSIAKEKDLYLPIAREVYYMLEGLDPHVSLRNFLSN</sequence>
<organism>
    <name type="scientific">Sulfurimonas denitrificans (strain ATCC 33889 / DSM 1251)</name>
    <name type="common">Thiomicrospira denitrificans (strain ATCC 33889 / DSM 1251)</name>
    <dbReference type="NCBI Taxonomy" id="326298"/>
    <lineage>
        <taxon>Bacteria</taxon>
        <taxon>Pseudomonadati</taxon>
        <taxon>Campylobacterota</taxon>
        <taxon>Epsilonproteobacteria</taxon>
        <taxon>Campylobacterales</taxon>
        <taxon>Sulfurimonadaceae</taxon>
        <taxon>Sulfurimonas</taxon>
    </lineage>
</organism>
<proteinExistence type="inferred from homology"/>
<keyword id="KW-0963">Cytoplasm</keyword>
<keyword id="KW-0444">Lipid biosynthesis</keyword>
<keyword id="KW-0443">Lipid metabolism</keyword>
<keyword id="KW-0520">NAD</keyword>
<keyword id="KW-0521">NADP</keyword>
<keyword id="KW-0547">Nucleotide-binding</keyword>
<keyword id="KW-0560">Oxidoreductase</keyword>
<keyword id="KW-0594">Phospholipid biosynthesis</keyword>
<keyword id="KW-1208">Phospholipid metabolism</keyword>
<keyword id="KW-1185">Reference proteome</keyword>
<evidence type="ECO:0000255" key="1">
    <source>
        <dbReference type="HAMAP-Rule" id="MF_00394"/>
    </source>
</evidence>
<feature type="chain" id="PRO_0000255393" description="Glycerol-3-phosphate dehydrogenase [NAD(P)+]">
    <location>
        <begin position="1"/>
        <end position="296"/>
    </location>
</feature>
<feature type="active site" description="Proton acceptor" evidence="1">
    <location>
        <position position="162"/>
    </location>
</feature>
<feature type="binding site" evidence="1">
    <location>
        <position position="12"/>
    </location>
    <ligand>
        <name>NADPH</name>
        <dbReference type="ChEBI" id="CHEBI:57783"/>
    </ligand>
</feature>
<feature type="binding site" evidence="1">
    <location>
        <position position="31"/>
    </location>
    <ligand>
        <name>NADPH</name>
        <dbReference type="ChEBI" id="CHEBI:57783"/>
    </ligand>
</feature>
<feature type="binding site" evidence="1">
    <location>
        <position position="80"/>
    </location>
    <ligand>
        <name>NADPH</name>
        <dbReference type="ChEBI" id="CHEBI:57783"/>
    </ligand>
</feature>
<feature type="binding site" evidence="1">
    <location>
        <position position="80"/>
    </location>
    <ligand>
        <name>sn-glycerol 3-phosphate</name>
        <dbReference type="ChEBI" id="CHEBI:57597"/>
    </ligand>
</feature>
<feature type="binding site" evidence="1">
    <location>
        <position position="108"/>
    </location>
    <ligand>
        <name>sn-glycerol 3-phosphate</name>
        <dbReference type="ChEBI" id="CHEBI:57597"/>
    </ligand>
</feature>
<feature type="binding site" evidence="1">
    <location>
        <position position="110"/>
    </location>
    <ligand>
        <name>sn-glycerol 3-phosphate</name>
        <dbReference type="ChEBI" id="CHEBI:57597"/>
    </ligand>
</feature>
<feature type="binding site" evidence="1">
    <location>
        <position position="112"/>
    </location>
    <ligand>
        <name>NADPH</name>
        <dbReference type="ChEBI" id="CHEBI:57783"/>
    </ligand>
</feature>
<feature type="binding site" evidence="1">
    <location>
        <position position="162"/>
    </location>
    <ligand>
        <name>sn-glycerol 3-phosphate</name>
        <dbReference type="ChEBI" id="CHEBI:57597"/>
    </ligand>
</feature>
<feature type="binding site" evidence="1">
    <location>
        <position position="215"/>
    </location>
    <ligand>
        <name>sn-glycerol 3-phosphate</name>
        <dbReference type="ChEBI" id="CHEBI:57597"/>
    </ligand>
</feature>
<feature type="binding site" evidence="1">
    <location>
        <position position="225"/>
    </location>
    <ligand>
        <name>sn-glycerol 3-phosphate</name>
        <dbReference type="ChEBI" id="CHEBI:57597"/>
    </ligand>
</feature>
<feature type="binding site" evidence="1">
    <location>
        <position position="226"/>
    </location>
    <ligand>
        <name>NADPH</name>
        <dbReference type="ChEBI" id="CHEBI:57783"/>
    </ligand>
</feature>
<feature type="binding site" evidence="1">
    <location>
        <position position="226"/>
    </location>
    <ligand>
        <name>sn-glycerol 3-phosphate</name>
        <dbReference type="ChEBI" id="CHEBI:57597"/>
    </ligand>
</feature>
<feature type="binding site" evidence="1">
    <location>
        <position position="227"/>
    </location>
    <ligand>
        <name>sn-glycerol 3-phosphate</name>
        <dbReference type="ChEBI" id="CHEBI:57597"/>
    </ligand>
</feature>
<feature type="binding site" evidence="1">
    <location>
        <position position="250"/>
    </location>
    <ligand>
        <name>NADPH</name>
        <dbReference type="ChEBI" id="CHEBI:57783"/>
    </ligand>
</feature>
<feature type="binding site" evidence="1">
    <location>
        <position position="252"/>
    </location>
    <ligand>
        <name>NADPH</name>
        <dbReference type="ChEBI" id="CHEBI:57783"/>
    </ligand>
</feature>